<gene>
    <name type="primary">OXTR</name>
</gene>
<sequence>MEGVLAANWSAEAVNSSAAPPEAEGNRTAGPPQRNEALARVEVAVLCLILFLALSGNACVLLALRTTRHKHSRLFFFMKHLSIADLVVAVFQVLPQLLWDITFRFYGPDLLCRLVKYLQVVGMFASTYLLLLMSLDRCLAICQPLRALRRPADRLAVLATWLGCLVASAPQVHIFSLREVADGVFDCWAVFIQPWGPKAYITWITLAVYIVPVIVLAACYGLISFKIWQNLRLKTAAEAAEAIAGTEGAAAGSRGRAALARVSSVKLISKAKIRTVKMTFIIVLAFIVCWTPFFFVQMWSVWDADAPKEASAFIIAMLLASLNSCCNPWIYMLFTGHLFHELVQRFLCCSSSHLKTSRPGETSVSKKSNSSTFVLSQHSSSQKSCS</sequence>
<reference key="1">
    <citation type="journal article" date="1993" name="Eur. J. Biochem.">
        <title>Molecular cloning and functional characterization of V2 [8-lysine] vasopressin and oxytocin receptors from a pig kidney cell line.</title>
        <authorList>
            <person name="Gorbulev V."/>
            <person name="Buechner H."/>
            <person name="Akhundova A."/>
            <person name="Fahrenholz F."/>
        </authorList>
    </citation>
    <scope>NUCLEOTIDE SEQUENCE [MRNA]</scope>
    <source>
        <tissue>Kidney</tissue>
    </source>
</reference>
<keyword id="KW-1003">Cell membrane</keyword>
<keyword id="KW-1015">Disulfide bond</keyword>
<keyword id="KW-0297">G-protein coupled receptor</keyword>
<keyword id="KW-0325">Glycoprotein</keyword>
<keyword id="KW-0472">Membrane</keyword>
<keyword id="KW-0597">Phosphoprotein</keyword>
<keyword id="KW-0675">Receptor</keyword>
<keyword id="KW-1185">Reference proteome</keyword>
<keyword id="KW-0807">Transducer</keyword>
<keyword id="KW-0812">Transmembrane</keyword>
<keyword id="KW-1133">Transmembrane helix</keyword>
<comment type="function">
    <text>Receptor for oxytocin. The activity of this receptor is mediated by G proteins which activate a phosphatidylinositol-calcium second messenger system.</text>
</comment>
<comment type="subcellular location">
    <subcellularLocation>
        <location>Cell membrane</location>
        <topology>Multi-pass membrane protein</topology>
    </subcellularLocation>
</comment>
<comment type="similarity">
    <text evidence="3">Belongs to the G-protein coupled receptor 1 family. Vasopressin/oxytocin receptor subfamily.</text>
</comment>
<evidence type="ECO:0000250" key="1">
    <source>
        <dbReference type="UniProtKB" id="P70536"/>
    </source>
</evidence>
<evidence type="ECO:0000255" key="2"/>
<evidence type="ECO:0000255" key="3">
    <source>
        <dbReference type="PROSITE-ProRule" id="PRU00521"/>
    </source>
</evidence>
<evidence type="ECO:0000256" key="4">
    <source>
        <dbReference type="SAM" id="MobiDB-lite"/>
    </source>
</evidence>
<organism>
    <name type="scientific">Sus scrofa</name>
    <name type="common">Pig</name>
    <dbReference type="NCBI Taxonomy" id="9823"/>
    <lineage>
        <taxon>Eukaryota</taxon>
        <taxon>Metazoa</taxon>
        <taxon>Chordata</taxon>
        <taxon>Craniata</taxon>
        <taxon>Vertebrata</taxon>
        <taxon>Euteleostomi</taxon>
        <taxon>Mammalia</taxon>
        <taxon>Eutheria</taxon>
        <taxon>Laurasiatheria</taxon>
        <taxon>Artiodactyla</taxon>
        <taxon>Suina</taxon>
        <taxon>Suidae</taxon>
        <taxon>Sus</taxon>
    </lineage>
</organism>
<proteinExistence type="evidence at transcript level"/>
<feature type="chain" id="PRO_0000070001" description="Oxytocin receptor">
    <location>
        <begin position="1"/>
        <end position="386"/>
    </location>
</feature>
<feature type="topological domain" description="Extracellular" evidence="2">
    <location>
        <begin position="1"/>
        <end position="38"/>
    </location>
</feature>
<feature type="transmembrane region" description="Helical; Name=1" evidence="2">
    <location>
        <begin position="39"/>
        <end position="63"/>
    </location>
</feature>
<feature type="topological domain" description="Cytoplasmic" evidence="2">
    <location>
        <begin position="64"/>
        <end position="74"/>
    </location>
</feature>
<feature type="transmembrane region" description="Helical; Name=2" evidence="2">
    <location>
        <begin position="75"/>
        <end position="97"/>
    </location>
</feature>
<feature type="topological domain" description="Extracellular" evidence="2">
    <location>
        <begin position="98"/>
        <end position="113"/>
    </location>
</feature>
<feature type="transmembrane region" description="Helical; Name=3" evidence="2">
    <location>
        <begin position="114"/>
        <end position="135"/>
    </location>
</feature>
<feature type="topological domain" description="Cytoplasmic" evidence="2">
    <location>
        <begin position="136"/>
        <end position="154"/>
    </location>
</feature>
<feature type="transmembrane region" description="Helical; Name=4" evidence="2">
    <location>
        <begin position="155"/>
        <end position="175"/>
    </location>
</feature>
<feature type="topological domain" description="Extracellular" evidence="2">
    <location>
        <begin position="176"/>
        <end position="202"/>
    </location>
</feature>
<feature type="transmembrane region" description="Helical; Name=5" evidence="2">
    <location>
        <begin position="203"/>
        <end position="225"/>
    </location>
</feature>
<feature type="topological domain" description="Cytoplasmic" evidence="2">
    <location>
        <begin position="226"/>
        <end position="277"/>
    </location>
</feature>
<feature type="transmembrane region" description="Helical; Name=6" evidence="2">
    <location>
        <begin position="278"/>
        <end position="296"/>
    </location>
</feature>
<feature type="topological domain" description="Extracellular" evidence="2">
    <location>
        <begin position="297"/>
        <end position="311"/>
    </location>
</feature>
<feature type="transmembrane region" description="Helical; Name=7" evidence="2">
    <location>
        <begin position="312"/>
        <end position="334"/>
    </location>
</feature>
<feature type="topological domain" description="Cytoplasmic" evidence="2">
    <location>
        <begin position="335"/>
        <end position="386"/>
    </location>
</feature>
<feature type="region of interest" description="Disordered" evidence="4">
    <location>
        <begin position="1"/>
        <end position="31"/>
    </location>
</feature>
<feature type="region of interest" description="Disordered" evidence="4">
    <location>
        <begin position="355"/>
        <end position="386"/>
    </location>
</feature>
<feature type="compositionally biased region" description="Polar residues" evidence="4">
    <location>
        <begin position="355"/>
        <end position="375"/>
    </location>
</feature>
<feature type="compositionally biased region" description="Low complexity" evidence="4">
    <location>
        <begin position="376"/>
        <end position="386"/>
    </location>
</feature>
<feature type="modified residue" description="Phosphoserine" evidence="1">
    <location>
        <position position="368"/>
    </location>
</feature>
<feature type="modified residue" description="Phosphoserine" evidence="1">
    <location>
        <position position="370"/>
    </location>
</feature>
<feature type="glycosylation site" description="N-linked (GlcNAc...) asparagine" evidence="2">
    <location>
        <position position="8"/>
    </location>
</feature>
<feature type="glycosylation site" description="N-linked (GlcNAc...) asparagine" evidence="2">
    <location>
        <position position="15"/>
    </location>
</feature>
<feature type="glycosylation site" description="N-linked (GlcNAc...) asparagine" evidence="2">
    <location>
        <position position="26"/>
    </location>
</feature>
<feature type="disulfide bond" evidence="3">
    <location>
        <begin position="112"/>
        <end position="187"/>
    </location>
</feature>
<protein>
    <recommendedName>
        <fullName>Oxytocin receptor</fullName>
        <shortName>OT-R</shortName>
    </recommendedName>
</protein>
<dbReference type="EMBL" id="X71796">
    <property type="protein sequence ID" value="CAA50679.1"/>
    <property type="molecule type" value="mRNA"/>
</dbReference>
<dbReference type="PIR" id="S34043">
    <property type="entry name" value="S34043"/>
</dbReference>
<dbReference type="RefSeq" id="NP_999192.1">
    <property type="nucleotide sequence ID" value="NM_214027.1"/>
</dbReference>
<dbReference type="SMR" id="P32306"/>
<dbReference type="FunCoup" id="P32306">
    <property type="interactions" value="85"/>
</dbReference>
<dbReference type="STRING" id="9823.ENSSSCP00000031665"/>
<dbReference type="GlyCosmos" id="P32306">
    <property type="glycosylation" value="3 sites, No reported glycans"/>
</dbReference>
<dbReference type="GlyGen" id="P32306">
    <property type="glycosylation" value="3 sites"/>
</dbReference>
<dbReference type="PaxDb" id="9823-ENSSSCP00000023004"/>
<dbReference type="GeneID" id="397092"/>
<dbReference type="KEGG" id="ssc:397092"/>
<dbReference type="CTD" id="5021"/>
<dbReference type="eggNOG" id="KOG3656">
    <property type="taxonomic scope" value="Eukaryota"/>
</dbReference>
<dbReference type="InParanoid" id="P32306"/>
<dbReference type="OrthoDB" id="6435638at2759"/>
<dbReference type="Proteomes" id="UP000008227">
    <property type="component" value="Unplaced"/>
</dbReference>
<dbReference type="Proteomes" id="UP000314985">
    <property type="component" value="Unplaced"/>
</dbReference>
<dbReference type="Proteomes" id="UP000694570">
    <property type="component" value="Unplaced"/>
</dbReference>
<dbReference type="Proteomes" id="UP000694571">
    <property type="component" value="Unplaced"/>
</dbReference>
<dbReference type="Proteomes" id="UP000694720">
    <property type="component" value="Unplaced"/>
</dbReference>
<dbReference type="Proteomes" id="UP000694722">
    <property type="component" value="Unplaced"/>
</dbReference>
<dbReference type="Proteomes" id="UP000694723">
    <property type="component" value="Unplaced"/>
</dbReference>
<dbReference type="Proteomes" id="UP000694724">
    <property type="component" value="Unplaced"/>
</dbReference>
<dbReference type="Proteomes" id="UP000694725">
    <property type="component" value="Unplaced"/>
</dbReference>
<dbReference type="Proteomes" id="UP000694726">
    <property type="component" value="Unplaced"/>
</dbReference>
<dbReference type="Proteomes" id="UP000694727">
    <property type="component" value="Unplaced"/>
</dbReference>
<dbReference type="Proteomes" id="UP000694728">
    <property type="component" value="Unplaced"/>
</dbReference>
<dbReference type="GO" id="GO:0005886">
    <property type="term" value="C:plasma membrane"/>
    <property type="evidence" value="ECO:0000318"/>
    <property type="project" value="GO_Central"/>
</dbReference>
<dbReference type="GO" id="GO:0004990">
    <property type="term" value="F:oxytocin receptor activity"/>
    <property type="evidence" value="ECO:0000318"/>
    <property type="project" value="GO_Central"/>
</dbReference>
<dbReference type="GO" id="GO:0005000">
    <property type="term" value="F:vasopressin receptor activity"/>
    <property type="evidence" value="ECO:0000318"/>
    <property type="project" value="GO_Central"/>
</dbReference>
<dbReference type="GO" id="GO:0032870">
    <property type="term" value="P:cellular response to hormone stimulus"/>
    <property type="evidence" value="ECO:0000318"/>
    <property type="project" value="GO_Central"/>
</dbReference>
<dbReference type="GO" id="GO:0007565">
    <property type="term" value="P:female pregnancy"/>
    <property type="evidence" value="ECO:0000318"/>
    <property type="project" value="GO_Central"/>
</dbReference>
<dbReference type="GO" id="GO:0007186">
    <property type="term" value="P:G protein-coupled receptor signaling pathway"/>
    <property type="evidence" value="ECO:0000318"/>
    <property type="project" value="GO_Central"/>
</dbReference>
<dbReference type="GO" id="GO:0060137">
    <property type="term" value="P:maternal process involved in parturition"/>
    <property type="evidence" value="ECO:0000318"/>
    <property type="project" value="GO_Central"/>
</dbReference>
<dbReference type="GO" id="GO:0045907">
    <property type="term" value="P:positive regulation of vasoconstriction"/>
    <property type="evidence" value="ECO:0000318"/>
    <property type="project" value="GO_Central"/>
</dbReference>
<dbReference type="GO" id="GO:0001992">
    <property type="term" value="P:regulation of systemic arterial blood pressure by vasopressin"/>
    <property type="evidence" value="ECO:0000318"/>
    <property type="project" value="GO_Central"/>
</dbReference>
<dbReference type="CDD" id="cd15387">
    <property type="entry name" value="7tmA_OT_R"/>
    <property type="match status" value="1"/>
</dbReference>
<dbReference type="FunFam" id="1.20.1070.10:FF:000145">
    <property type="entry name" value="Oxytocin receptor"/>
    <property type="match status" value="1"/>
</dbReference>
<dbReference type="Gene3D" id="1.20.1070.10">
    <property type="entry name" value="Rhodopsin 7-helix transmembrane proteins"/>
    <property type="match status" value="1"/>
</dbReference>
<dbReference type="InterPro" id="IPR000276">
    <property type="entry name" value="GPCR_Rhodpsn"/>
</dbReference>
<dbReference type="InterPro" id="IPR017452">
    <property type="entry name" value="GPCR_Rhodpsn_7TM"/>
</dbReference>
<dbReference type="InterPro" id="IPR002062">
    <property type="entry name" value="Oxytocn_rcpt"/>
</dbReference>
<dbReference type="InterPro" id="IPR001817">
    <property type="entry name" value="Vasoprsn_rcpt"/>
</dbReference>
<dbReference type="PANTHER" id="PTHR24241">
    <property type="entry name" value="NEUROPEPTIDE RECEPTOR-RELATED G-PROTEIN COUPLED RECEPTOR"/>
    <property type="match status" value="1"/>
</dbReference>
<dbReference type="PANTHER" id="PTHR24241:SF89">
    <property type="entry name" value="OXYTOCIN RECEPTOR"/>
    <property type="match status" value="1"/>
</dbReference>
<dbReference type="Pfam" id="PF00001">
    <property type="entry name" value="7tm_1"/>
    <property type="match status" value="1"/>
</dbReference>
<dbReference type="PRINTS" id="PR00237">
    <property type="entry name" value="GPCRRHODOPSN"/>
</dbReference>
<dbReference type="PRINTS" id="PR00665">
    <property type="entry name" value="OXYTOCINR"/>
</dbReference>
<dbReference type="PRINTS" id="PR00896">
    <property type="entry name" value="VASOPRESSINR"/>
</dbReference>
<dbReference type="SUPFAM" id="SSF81321">
    <property type="entry name" value="Family A G protein-coupled receptor-like"/>
    <property type="match status" value="1"/>
</dbReference>
<dbReference type="PROSITE" id="PS00237">
    <property type="entry name" value="G_PROTEIN_RECEP_F1_1"/>
    <property type="match status" value="1"/>
</dbReference>
<dbReference type="PROSITE" id="PS50262">
    <property type="entry name" value="G_PROTEIN_RECEP_F1_2"/>
    <property type="match status" value="1"/>
</dbReference>
<accession>P32306</accession>
<name>OXYR_PIG</name>